<comment type="function">
    <text evidence="1">Catalyzes the ATP-dependent phosphorylation of N-acetyl-L-glutamate.</text>
</comment>
<comment type="catalytic activity">
    <reaction evidence="1">
        <text>N-acetyl-L-glutamate + ATP = N-acetyl-L-glutamyl 5-phosphate + ADP</text>
        <dbReference type="Rhea" id="RHEA:14629"/>
        <dbReference type="ChEBI" id="CHEBI:30616"/>
        <dbReference type="ChEBI" id="CHEBI:44337"/>
        <dbReference type="ChEBI" id="CHEBI:57936"/>
        <dbReference type="ChEBI" id="CHEBI:456216"/>
        <dbReference type="EC" id="2.7.2.8"/>
    </reaction>
</comment>
<comment type="pathway">
    <text evidence="1">Amino-acid biosynthesis; L-arginine biosynthesis; N(2)-acetyl-L-ornithine from L-glutamate: step 2/4.</text>
</comment>
<comment type="subcellular location">
    <subcellularLocation>
        <location evidence="1">Cytoplasm</location>
    </subcellularLocation>
</comment>
<comment type="similarity">
    <text evidence="1">Belongs to the acetylglutamate kinase family. ArgB subfamily.</text>
</comment>
<reference key="1">
    <citation type="book" date="2006" name="Gram positive pathogens, 2nd edition">
        <title>The Staphylococcus aureus NCTC 8325 genome.</title>
        <editorList>
            <person name="Fischetti V."/>
            <person name="Novick R."/>
            <person name="Ferretti J."/>
            <person name="Portnoy D."/>
            <person name="Rood J."/>
        </editorList>
        <authorList>
            <person name="Gillaspy A.F."/>
            <person name="Worrell V."/>
            <person name="Orvis J."/>
            <person name="Roe B.A."/>
            <person name="Dyer D.W."/>
            <person name="Iandolo J.J."/>
        </authorList>
    </citation>
    <scope>NUCLEOTIDE SEQUENCE [LARGE SCALE GENOMIC DNA]</scope>
    <source>
        <strain>NCTC 8325 / PS 47</strain>
    </source>
</reference>
<organism>
    <name type="scientific">Staphylococcus aureus (strain NCTC 8325 / PS 47)</name>
    <dbReference type="NCBI Taxonomy" id="93061"/>
    <lineage>
        <taxon>Bacteria</taxon>
        <taxon>Bacillati</taxon>
        <taxon>Bacillota</taxon>
        <taxon>Bacilli</taxon>
        <taxon>Bacillales</taxon>
        <taxon>Staphylococcaceae</taxon>
        <taxon>Staphylococcus</taxon>
    </lineage>
</organism>
<proteinExistence type="inferred from homology"/>
<sequence length="254" mass="27739">MKFIVIKIGGSTLSDMHPSIINNIKHLRSNNIYPIIVHGGGPFINEALSNQQIEPHFVNGLRVTDKATMTITKHTLIADVNTALVAQFNQHQCSAIGLCGLDAQLFEITSFDQQYGYVGVPTALNKDALQYLCTKFVPIINSIGFNNHDGEFYNINADTLAYFIASSLKAPIYVLSNIAGVLINDVVIPQLPLVDIHQYIEHGDIYGGMIPKVLDAKNAIENGCPKVIIASGNKPNIIESIYNNDFVGTTILNS</sequence>
<accession>Q2G1H6</accession>
<evidence type="ECO:0000255" key="1">
    <source>
        <dbReference type="HAMAP-Rule" id="MF_00082"/>
    </source>
</evidence>
<gene>
    <name evidence="1" type="primary">argB</name>
    <name type="ordered locus">SAOUHSC_00147</name>
</gene>
<name>ARGB_STAA8</name>
<protein>
    <recommendedName>
        <fullName evidence="1">Acetylglutamate kinase</fullName>
        <ecNumber evidence="1">2.7.2.8</ecNumber>
    </recommendedName>
    <alternativeName>
        <fullName evidence="1">N-acetyl-L-glutamate 5-phosphotransferase</fullName>
    </alternativeName>
    <alternativeName>
        <fullName evidence="1">NAG kinase</fullName>
        <shortName evidence="1">NAGK</shortName>
    </alternativeName>
</protein>
<dbReference type="EC" id="2.7.2.8" evidence="1"/>
<dbReference type="EMBL" id="CP000253">
    <property type="protein sequence ID" value="ABD29327.1"/>
    <property type="molecule type" value="Genomic_DNA"/>
</dbReference>
<dbReference type="RefSeq" id="WP_000668894.1">
    <property type="nucleotide sequence ID" value="NZ_LS483365.1"/>
</dbReference>
<dbReference type="RefSeq" id="YP_498746.1">
    <property type="nucleotide sequence ID" value="NC_007795.1"/>
</dbReference>
<dbReference type="SMR" id="Q2G1H6"/>
<dbReference type="STRING" id="93061.SAOUHSC_00147"/>
<dbReference type="PaxDb" id="1280-SAXN108_0167"/>
<dbReference type="GeneID" id="3919855"/>
<dbReference type="KEGG" id="sao:SAOUHSC_00147"/>
<dbReference type="PATRIC" id="fig|93061.5.peg.138"/>
<dbReference type="eggNOG" id="COG0548">
    <property type="taxonomic scope" value="Bacteria"/>
</dbReference>
<dbReference type="HOGENOM" id="CLU_053680_1_0_9"/>
<dbReference type="OrthoDB" id="9803155at2"/>
<dbReference type="UniPathway" id="UPA00068">
    <property type="reaction ID" value="UER00107"/>
</dbReference>
<dbReference type="PRO" id="PR:Q2G1H6"/>
<dbReference type="Proteomes" id="UP000008816">
    <property type="component" value="Chromosome"/>
</dbReference>
<dbReference type="GO" id="GO:0005737">
    <property type="term" value="C:cytoplasm"/>
    <property type="evidence" value="ECO:0007669"/>
    <property type="project" value="UniProtKB-SubCell"/>
</dbReference>
<dbReference type="GO" id="GO:0003991">
    <property type="term" value="F:acetylglutamate kinase activity"/>
    <property type="evidence" value="ECO:0000318"/>
    <property type="project" value="GO_Central"/>
</dbReference>
<dbReference type="GO" id="GO:0005524">
    <property type="term" value="F:ATP binding"/>
    <property type="evidence" value="ECO:0007669"/>
    <property type="project" value="UniProtKB-UniRule"/>
</dbReference>
<dbReference type="GO" id="GO:0042450">
    <property type="term" value="P:arginine biosynthetic process via ornithine"/>
    <property type="evidence" value="ECO:0007669"/>
    <property type="project" value="UniProtKB-UniRule"/>
</dbReference>
<dbReference type="GO" id="GO:0006526">
    <property type="term" value="P:L-arginine biosynthetic process"/>
    <property type="evidence" value="ECO:0000318"/>
    <property type="project" value="GO_Central"/>
</dbReference>
<dbReference type="CDD" id="cd04238">
    <property type="entry name" value="AAK_NAGK-like"/>
    <property type="match status" value="1"/>
</dbReference>
<dbReference type="FunFam" id="3.40.1160.10:FF:000037">
    <property type="entry name" value="Acetylglutamate kinase"/>
    <property type="match status" value="1"/>
</dbReference>
<dbReference type="Gene3D" id="3.40.1160.10">
    <property type="entry name" value="Acetylglutamate kinase-like"/>
    <property type="match status" value="1"/>
</dbReference>
<dbReference type="HAMAP" id="MF_00082">
    <property type="entry name" value="ArgB"/>
    <property type="match status" value="1"/>
</dbReference>
<dbReference type="InterPro" id="IPR036393">
    <property type="entry name" value="AceGlu_kinase-like_sf"/>
</dbReference>
<dbReference type="InterPro" id="IPR004662">
    <property type="entry name" value="AcgluKinase_fam"/>
</dbReference>
<dbReference type="InterPro" id="IPR037528">
    <property type="entry name" value="ArgB"/>
</dbReference>
<dbReference type="InterPro" id="IPR001048">
    <property type="entry name" value="Asp/Glu/Uridylate_kinase"/>
</dbReference>
<dbReference type="NCBIfam" id="TIGR00761">
    <property type="entry name" value="argB"/>
    <property type="match status" value="1"/>
</dbReference>
<dbReference type="PANTHER" id="PTHR23342">
    <property type="entry name" value="N-ACETYLGLUTAMATE SYNTHASE"/>
    <property type="match status" value="1"/>
</dbReference>
<dbReference type="PANTHER" id="PTHR23342:SF0">
    <property type="entry name" value="N-ACETYLGLUTAMATE SYNTHASE, MITOCHONDRIAL"/>
    <property type="match status" value="1"/>
</dbReference>
<dbReference type="Pfam" id="PF00696">
    <property type="entry name" value="AA_kinase"/>
    <property type="match status" value="1"/>
</dbReference>
<dbReference type="PIRSF" id="PIRSF000728">
    <property type="entry name" value="NAGK"/>
    <property type="match status" value="1"/>
</dbReference>
<dbReference type="SUPFAM" id="SSF53633">
    <property type="entry name" value="Carbamate kinase-like"/>
    <property type="match status" value="1"/>
</dbReference>
<feature type="chain" id="PRO_0000264766" description="Acetylglutamate kinase">
    <location>
        <begin position="1"/>
        <end position="254"/>
    </location>
</feature>
<feature type="binding site" evidence="1">
    <location>
        <begin position="40"/>
        <end position="41"/>
    </location>
    <ligand>
        <name>substrate</name>
    </ligand>
</feature>
<feature type="binding site" evidence="1">
    <location>
        <position position="62"/>
    </location>
    <ligand>
        <name>substrate</name>
    </ligand>
</feature>
<feature type="binding site" evidence="1">
    <location>
        <position position="154"/>
    </location>
    <ligand>
        <name>substrate</name>
    </ligand>
</feature>
<feature type="site" description="Transition state stabilizer" evidence="1">
    <location>
        <position position="7"/>
    </location>
</feature>
<feature type="site" description="Transition state stabilizer" evidence="1">
    <location>
        <position position="212"/>
    </location>
</feature>
<keyword id="KW-0028">Amino-acid biosynthesis</keyword>
<keyword id="KW-0055">Arginine biosynthesis</keyword>
<keyword id="KW-0067">ATP-binding</keyword>
<keyword id="KW-0963">Cytoplasm</keyword>
<keyword id="KW-0418">Kinase</keyword>
<keyword id="KW-0547">Nucleotide-binding</keyword>
<keyword id="KW-1185">Reference proteome</keyword>
<keyword id="KW-0808">Transferase</keyword>